<proteinExistence type="inferred from homology"/>
<sequence>MNPNQKIITIGSISIAIGIISLMLQIGNIISMWASHSIQTGSQNHTGICNQRIITYENSTWVNHTYVNINNTNVVTGKDKTSVTLAGNSSLCSISGWAIYTKDNSIRIGSKGDVFVIREPFISCSHLECRTFFLTQGALLNDKHSNGTVKDRSPYRALMSCPLGEAPSPYNSKFESVAWSASACHDGMGWLTIGISGPDNGAVAVLKYNGIITETIKSWKKRILRTQESECVCVNGSCFTIMTDGPSDGAASYKIFKIEKGKVTKSIELNAPNFHYEECSCYPDTGTVMCVCRDNWHGSNRPWVSFNQNLDYQIGYICSGVFGDNPRPKDGKGSCNPVTVDGADGVKGFSYKYGNGVWIGRTKSNKLRKGFEMIWDPNGWTDTDNDFSVKQDVVAITDWSGYSGSFVQHPELTGLDCIRPCFWVELVRGLPRENATIWTSGSSISFCGVDSDTANWSWPDGAELPFTIDK</sequence>
<comment type="function">
    <text evidence="1">Catalyzes the removal of terminal sialic acid residues from viral and cellular glycoconjugates. Cleaves off the terminal sialic acids on the glycosylated HA during virus budding to facilitate virus release. Additionally helps virus spread through the circulation by further removing sialic acids from the cell surface. These cleavages prevent self-aggregation and ensure the efficient spread of the progeny virus from cell to cell. Otherwise, infection would be limited to one round of replication. Described as a receptor-destroying enzyme because it cleaves a terminal sialic acid from the cellular receptors. May facilitate viral invasion of the upper airways by cleaving the sialic acid moieties on the mucin of the airway epithelial cells. Likely to plays a role in the budding process through its association with lipid rafts during intracellular transport. May additionally display a raft-association independent effect on budding. Plays a role in the determination of host range restriction on replication and virulence. Sialidase activity in late endosome/lysosome traffic seems to enhance virus replication.</text>
</comment>
<comment type="catalytic activity">
    <reaction evidence="1">
        <text>Hydrolysis of alpha-(2-&gt;3)-, alpha-(2-&gt;6)-, alpha-(2-&gt;8)- glycosidic linkages of terminal sialic acid residues in oligosaccharides, glycoproteins, glycolipids, colominic acid and synthetic substrates.</text>
        <dbReference type="EC" id="3.2.1.18"/>
    </reaction>
</comment>
<comment type="cofactor">
    <cofactor evidence="1">
        <name>Ca(2+)</name>
        <dbReference type="ChEBI" id="CHEBI:29108"/>
    </cofactor>
</comment>
<comment type="activity regulation">
    <text evidence="1">Inhibited by the neuraminidase inhibitors zanamivir (Relenza) and oseltamivir (Tamiflu). These drugs interfere with the release of progeny virus from infected cells and are effective against all influenza strains. Resistance to neuraminidase inhibitors is quite rare.</text>
</comment>
<comment type="subunit">
    <text evidence="1">Homotetramer.</text>
</comment>
<comment type="subcellular location">
    <subcellularLocation>
        <location evidence="1">Virion membrane</location>
    </subcellularLocation>
    <subcellularLocation>
        <location evidence="1">Host apical cell membrane</location>
        <topology evidence="1">Single-pass type II membrane protein</topology>
    </subcellularLocation>
    <text evidence="1">Preferentially accumulates at the apical plasma membrane in infected polarized epithelial cells, which is the virus assembly site. Uses lipid rafts for cell surface transport and apical sorting. In the virion, forms a mushroom-shaped spike on the surface of the membrane.</text>
</comment>
<comment type="domain">
    <text evidence="1">Intact N-terminus is essential for virion morphogenesis. Possesses two apical sorting signals, one in the ectodomain, which is likely to be a glycan, and the other in the transmembrane domain. The transmembrane domain also plays a role in lipid raft association.</text>
</comment>
<comment type="PTM">
    <text evidence="1">N-glycosylated.</text>
</comment>
<comment type="miscellaneous">
    <text>The influenza A genome consist of 8 RNA segments. Genetic variation of hemagglutinin and/or neuraminidase genes results in the emergence of new influenza strains. The mechanism of variation can be the result of point mutations or the result of genetic reassortment between segments of two different strains.</text>
</comment>
<comment type="similarity">
    <text evidence="1">Belongs to the glycosyl hydrolase 34 family.</text>
</comment>
<name>NRAM_I07A0</name>
<evidence type="ECO:0000255" key="1">
    <source>
        <dbReference type="HAMAP-Rule" id="MF_04071"/>
    </source>
</evidence>
<accession>A8C8J7</accession>
<dbReference type="EC" id="3.2.1.18" evidence="1"/>
<dbReference type="EMBL" id="CY026213">
    <property type="protein sequence ID" value="ABV45929.1"/>
    <property type="molecule type" value="Viral_cRNA"/>
</dbReference>
<dbReference type="SMR" id="A8C8J7"/>
<dbReference type="CAZy" id="GH34">
    <property type="family name" value="Glycoside Hydrolase Family 34"/>
</dbReference>
<dbReference type="GlyCosmos" id="A8C8J7">
    <property type="glycosylation" value="9 sites, No reported glycans"/>
</dbReference>
<dbReference type="Proteomes" id="UP001395887">
    <property type="component" value="Genome"/>
</dbReference>
<dbReference type="GO" id="GO:0020002">
    <property type="term" value="C:host cell plasma membrane"/>
    <property type="evidence" value="ECO:0007669"/>
    <property type="project" value="UniProtKB-SubCell"/>
</dbReference>
<dbReference type="GO" id="GO:0016020">
    <property type="term" value="C:membrane"/>
    <property type="evidence" value="ECO:0007669"/>
    <property type="project" value="UniProtKB-UniRule"/>
</dbReference>
<dbReference type="GO" id="GO:0055036">
    <property type="term" value="C:virion membrane"/>
    <property type="evidence" value="ECO:0007669"/>
    <property type="project" value="UniProtKB-SubCell"/>
</dbReference>
<dbReference type="GO" id="GO:0004308">
    <property type="term" value="F:exo-alpha-sialidase activity"/>
    <property type="evidence" value="ECO:0007669"/>
    <property type="project" value="UniProtKB-UniRule"/>
</dbReference>
<dbReference type="GO" id="GO:0046872">
    <property type="term" value="F:metal ion binding"/>
    <property type="evidence" value="ECO:0007669"/>
    <property type="project" value="UniProtKB-UniRule"/>
</dbReference>
<dbReference type="GO" id="GO:0005975">
    <property type="term" value="P:carbohydrate metabolic process"/>
    <property type="evidence" value="ECO:0007669"/>
    <property type="project" value="InterPro"/>
</dbReference>
<dbReference type="GO" id="GO:0046761">
    <property type="term" value="P:viral budding from plasma membrane"/>
    <property type="evidence" value="ECO:0007669"/>
    <property type="project" value="UniProtKB-UniRule"/>
</dbReference>
<dbReference type="CDD" id="cd15483">
    <property type="entry name" value="Influenza_NA"/>
    <property type="match status" value="1"/>
</dbReference>
<dbReference type="FunFam" id="2.120.10.10:FF:000001">
    <property type="entry name" value="Neuraminidase"/>
    <property type="match status" value="1"/>
</dbReference>
<dbReference type="Gene3D" id="2.120.10.10">
    <property type="match status" value="1"/>
</dbReference>
<dbReference type="HAMAP" id="MF_04071">
    <property type="entry name" value="INFV_NRAM"/>
    <property type="match status" value="1"/>
</dbReference>
<dbReference type="InterPro" id="IPR001860">
    <property type="entry name" value="Glyco_hydro_34"/>
</dbReference>
<dbReference type="InterPro" id="IPR033654">
    <property type="entry name" value="Sialidase_Influenza_A/B"/>
</dbReference>
<dbReference type="InterPro" id="IPR036278">
    <property type="entry name" value="Sialidase_sf"/>
</dbReference>
<dbReference type="Pfam" id="PF00064">
    <property type="entry name" value="Neur"/>
    <property type="match status" value="1"/>
</dbReference>
<dbReference type="SUPFAM" id="SSF50939">
    <property type="entry name" value="Sialidases"/>
    <property type="match status" value="1"/>
</dbReference>
<protein>
    <recommendedName>
        <fullName evidence="1">Neuraminidase</fullName>
        <ecNumber evidence="1">3.2.1.18</ecNumber>
    </recommendedName>
</protein>
<gene>
    <name evidence="1" type="primary">NA</name>
</gene>
<keyword id="KW-0106">Calcium</keyword>
<keyword id="KW-1015">Disulfide bond</keyword>
<keyword id="KW-0325">Glycoprotein</keyword>
<keyword id="KW-0326">Glycosidase</keyword>
<keyword id="KW-1032">Host cell membrane</keyword>
<keyword id="KW-1043">Host membrane</keyword>
<keyword id="KW-0378">Hydrolase</keyword>
<keyword id="KW-0472">Membrane</keyword>
<keyword id="KW-0479">Metal-binding</keyword>
<keyword id="KW-0735">Signal-anchor</keyword>
<keyword id="KW-0812">Transmembrane</keyword>
<keyword id="KW-1133">Transmembrane helix</keyword>
<keyword id="KW-0946">Virion</keyword>
<organismHost>
    <name type="scientific">Aves</name>
    <dbReference type="NCBI Taxonomy" id="8782"/>
</organismHost>
<organismHost>
    <name type="scientific">Homo sapiens</name>
    <name type="common">Human</name>
    <dbReference type="NCBI Taxonomy" id="9606"/>
</organismHost>
<organismHost>
    <name type="scientific">Sus scrofa</name>
    <name type="common">Pig</name>
    <dbReference type="NCBI Taxonomy" id="9823"/>
</organismHost>
<feature type="chain" id="PRO_0000372963" description="Neuraminidase">
    <location>
        <begin position="1"/>
        <end position="470"/>
    </location>
</feature>
<feature type="topological domain" description="Intravirion" evidence="1">
    <location>
        <begin position="1"/>
        <end position="6"/>
    </location>
</feature>
<feature type="transmembrane region" description="Helical" evidence="1">
    <location>
        <begin position="7"/>
        <end position="27"/>
    </location>
</feature>
<feature type="topological domain" description="Virion surface" evidence="1">
    <location>
        <begin position="28"/>
        <end position="470"/>
    </location>
</feature>
<feature type="region of interest" description="Involved in apical transport and lipid raft association" evidence="1">
    <location>
        <begin position="11"/>
        <end position="33"/>
    </location>
</feature>
<feature type="region of interest" description="Hypervariable stalk region" evidence="1">
    <location>
        <begin position="36"/>
        <end position="90"/>
    </location>
</feature>
<feature type="region of interest" description="Head of neuraminidase" evidence="1">
    <location>
        <begin position="91"/>
        <end position="470"/>
    </location>
</feature>
<feature type="active site" description="Proton donor/acceptor" evidence="1">
    <location>
        <position position="151"/>
    </location>
</feature>
<feature type="active site" description="Nucleophile" evidence="1">
    <location>
        <position position="402"/>
    </location>
</feature>
<feature type="binding site" evidence="1">
    <location>
        <position position="118"/>
    </location>
    <ligand>
        <name>substrate</name>
    </ligand>
</feature>
<feature type="binding site" evidence="1">
    <location>
        <position position="152"/>
    </location>
    <ligand>
        <name>substrate</name>
    </ligand>
</feature>
<feature type="binding site" evidence="1">
    <location>
        <begin position="277"/>
        <end position="278"/>
    </location>
    <ligand>
        <name>substrate</name>
    </ligand>
</feature>
<feature type="binding site" evidence="1">
    <location>
        <position position="293"/>
    </location>
    <ligand>
        <name>substrate</name>
    </ligand>
</feature>
<feature type="binding site" evidence="1">
    <location>
        <position position="294"/>
    </location>
    <ligand>
        <name>Ca(2+)</name>
        <dbReference type="ChEBI" id="CHEBI:29108"/>
    </ligand>
</feature>
<feature type="binding site" evidence="1">
    <location>
        <position position="298"/>
    </location>
    <ligand>
        <name>Ca(2+)</name>
        <dbReference type="ChEBI" id="CHEBI:29108"/>
    </ligand>
</feature>
<feature type="binding site" evidence="1">
    <location>
        <position position="324"/>
    </location>
    <ligand>
        <name>Ca(2+)</name>
        <dbReference type="ChEBI" id="CHEBI:29108"/>
    </ligand>
</feature>
<feature type="binding site" evidence="1">
    <location>
        <position position="368"/>
    </location>
    <ligand>
        <name>substrate</name>
    </ligand>
</feature>
<feature type="glycosylation site" description="N-linked (GlcNAc...) asparagine; by host" evidence="1">
    <location>
        <position position="44"/>
    </location>
</feature>
<feature type="glycosylation site" description="N-linked (GlcNAc...) asparagine; by host" evidence="1">
    <location>
        <position position="58"/>
    </location>
</feature>
<feature type="glycosylation site" description="N-linked (GlcNAc...) asparagine; by host" evidence="1">
    <location>
        <position position="63"/>
    </location>
</feature>
<feature type="glycosylation site" description="N-linked (GlcNAc...) asparagine; by host" evidence="1">
    <location>
        <position position="70"/>
    </location>
</feature>
<feature type="glycosylation site" description="N-linked (GlcNAc...) asparagine; by host" evidence="1">
    <location>
        <position position="88"/>
    </location>
</feature>
<feature type="glycosylation site" description="N-linked (GlcNAc...) asparagine; by host" evidence="1">
    <location>
        <position position="146"/>
    </location>
</feature>
<feature type="glycosylation site" description="N-linked (GlcNAc...) asparagine; by host" evidence="1">
    <location>
        <position position="235"/>
    </location>
</feature>
<feature type="glycosylation site" description="N-linked (GlcNAc...) asparagine; by host" evidence="1">
    <location>
        <position position="434"/>
    </location>
</feature>
<feature type="glycosylation site" description="N-linked (GlcNAc...) asparagine; by host" evidence="1">
    <location>
        <position position="455"/>
    </location>
</feature>
<feature type="disulfide bond" evidence="1">
    <location>
        <begin position="92"/>
        <end position="417"/>
    </location>
</feature>
<feature type="disulfide bond" evidence="1">
    <location>
        <begin position="124"/>
        <end position="129"/>
    </location>
</feature>
<feature type="disulfide bond" evidence="1">
    <location>
        <begin position="184"/>
        <end position="231"/>
    </location>
</feature>
<feature type="disulfide bond" evidence="1">
    <location>
        <begin position="233"/>
        <end position="238"/>
    </location>
</feature>
<feature type="disulfide bond" evidence="1">
    <location>
        <begin position="279"/>
        <end position="292"/>
    </location>
</feature>
<feature type="disulfide bond" evidence="1">
    <location>
        <begin position="281"/>
        <end position="290"/>
    </location>
</feature>
<feature type="disulfide bond" evidence="1">
    <location>
        <begin position="318"/>
        <end position="335"/>
    </location>
</feature>
<feature type="disulfide bond" evidence="1">
    <location>
        <begin position="421"/>
        <end position="447"/>
    </location>
</feature>
<reference key="1">
    <citation type="submission" date="2007-09" db="EMBL/GenBank/DDBJ databases">
        <title>The NIAID influenza genome sequencing project.</title>
        <authorList>
            <person name="Spiro D."/>
            <person name="Sengamalay N."/>
            <person name="Boyne A."/>
            <person name="Bera J."/>
            <person name="Zaborsky J."/>
            <person name="Subbu V."/>
            <person name="Sparenborg J."/>
            <person name="Gallagher T."/>
            <person name="Overton L."/>
            <person name="Althoff R."/>
            <person name="Liu X."/>
            <person name="Ghedin E."/>
            <person name="Sitz J."/>
            <person name="Katzel D."/>
            <person name="Neupane R."/>
            <person name="Shumway M."/>
            <person name="Koo H."/>
            <person name="Edelman L."/>
            <person name="Menegus M."/>
            <person name="Mayer C."/>
            <person name="Dale S."/>
            <person name="Bao Y."/>
            <person name="Bolotov P."/>
            <person name="Dernovoy D."/>
            <person name="Kiryutin B."/>
            <person name="Lipman D.J."/>
            <person name="Tatusova T."/>
        </authorList>
    </citation>
    <scope>NUCLEOTIDE SEQUENCE [GENOMIC RNA]</scope>
</reference>
<reference key="2">
    <citation type="submission" date="2007-09" db="EMBL/GenBank/DDBJ databases">
        <authorList>
            <consortium name="The NIAID Influenza Genome Sequencing Consortium"/>
        </authorList>
    </citation>
    <scope>NUCLEOTIDE SEQUENCE [GENOMIC RNA]</scope>
</reference>
<organism>
    <name type="scientific">Influenza A virus (strain A/USA:Texas/UR06-0195/2007 H1N1)</name>
    <dbReference type="NCBI Taxonomy" id="455880"/>
    <lineage>
        <taxon>Viruses</taxon>
        <taxon>Riboviria</taxon>
        <taxon>Orthornavirae</taxon>
        <taxon>Negarnaviricota</taxon>
        <taxon>Polyploviricotina</taxon>
        <taxon>Insthoviricetes</taxon>
        <taxon>Articulavirales</taxon>
        <taxon>Orthomyxoviridae</taxon>
        <taxon>Alphainfluenzavirus</taxon>
        <taxon>Alphainfluenzavirus influenzae</taxon>
        <taxon>Influenza A virus</taxon>
    </lineage>
</organism>